<dbReference type="EMBL" id="AP003214">
    <property type="protein sequence ID" value="BAD52815.1"/>
    <property type="molecule type" value="Genomic_DNA"/>
</dbReference>
<dbReference type="EMBL" id="AP008207">
    <property type="protein sequence ID" value="BAF03864.2"/>
    <property type="molecule type" value="Genomic_DNA"/>
</dbReference>
<dbReference type="EMBL" id="AP014957">
    <property type="protein sequence ID" value="BAS70257.1"/>
    <property type="molecule type" value="Genomic_DNA"/>
</dbReference>
<dbReference type="EMBL" id="CM000138">
    <property type="protein sequence ID" value="EAZ10442.1"/>
    <property type="molecule type" value="Genomic_DNA"/>
</dbReference>
<dbReference type="EMBL" id="AK062711">
    <property type="protein sequence ID" value="BAG88421.1"/>
    <property type="molecule type" value="mRNA"/>
</dbReference>
<dbReference type="RefSeq" id="XP_015620971.1">
    <property type="nucleotide sequence ID" value="XM_015765485.1"/>
</dbReference>
<dbReference type="SMR" id="Q5ZCK5"/>
<dbReference type="FunCoup" id="Q5ZCK5">
    <property type="interactions" value="157"/>
</dbReference>
<dbReference type="STRING" id="39947.Q5ZCK5"/>
<dbReference type="PaxDb" id="39947-Q5ZCK5"/>
<dbReference type="EnsemblPlants" id="Os01t0135700-01">
    <property type="protein sequence ID" value="Os01t0135700-01"/>
    <property type="gene ID" value="Os01g0135700"/>
</dbReference>
<dbReference type="Gramene" id="Os01t0135700-01">
    <property type="protein sequence ID" value="Os01t0135700-01"/>
    <property type="gene ID" value="Os01g0135700"/>
</dbReference>
<dbReference type="KEGG" id="dosa:Os01g0135700"/>
<dbReference type="eggNOG" id="KOG0027">
    <property type="taxonomic scope" value="Eukaryota"/>
</dbReference>
<dbReference type="HOGENOM" id="CLU_061288_20_4_1"/>
<dbReference type="InParanoid" id="Q5ZCK5"/>
<dbReference type="OMA" id="FKKMMAP"/>
<dbReference type="OrthoDB" id="647688at2759"/>
<dbReference type="Proteomes" id="UP000000763">
    <property type="component" value="Chromosome 1"/>
</dbReference>
<dbReference type="Proteomes" id="UP000007752">
    <property type="component" value="Chromosome 1"/>
</dbReference>
<dbReference type="Proteomes" id="UP000059680">
    <property type="component" value="Chromosome 1"/>
</dbReference>
<dbReference type="GO" id="GO:0005509">
    <property type="term" value="F:calcium ion binding"/>
    <property type="evidence" value="ECO:0007669"/>
    <property type="project" value="InterPro"/>
</dbReference>
<dbReference type="CDD" id="cd00051">
    <property type="entry name" value="EFh"/>
    <property type="match status" value="2"/>
</dbReference>
<dbReference type="FunFam" id="1.10.238.10:FF:000459">
    <property type="entry name" value="Probable calcium-binding protein CML16"/>
    <property type="match status" value="1"/>
</dbReference>
<dbReference type="FunFam" id="1.10.238.10:FF:000353">
    <property type="entry name" value="Probable calcium-binding protein CML31"/>
    <property type="match status" value="1"/>
</dbReference>
<dbReference type="Gene3D" id="1.10.238.10">
    <property type="entry name" value="EF-hand"/>
    <property type="match status" value="2"/>
</dbReference>
<dbReference type="InterPro" id="IPR011992">
    <property type="entry name" value="EF-hand-dom_pair"/>
</dbReference>
<dbReference type="InterPro" id="IPR018247">
    <property type="entry name" value="EF_Hand_1_Ca_BS"/>
</dbReference>
<dbReference type="InterPro" id="IPR002048">
    <property type="entry name" value="EF_hand_dom"/>
</dbReference>
<dbReference type="InterPro" id="IPR039647">
    <property type="entry name" value="EF_hand_pair_protein_CML-like"/>
</dbReference>
<dbReference type="PANTHER" id="PTHR10891">
    <property type="entry name" value="EF-HAND CALCIUM-BINDING DOMAIN CONTAINING PROTEIN"/>
    <property type="match status" value="1"/>
</dbReference>
<dbReference type="Pfam" id="PF13499">
    <property type="entry name" value="EF-hand_7"/>
    <property type="match status" value="2"/>
</dbReference>
<dbReference type="SMART" id="SM00054">
    <property type="entry name" value="EFh"/>
    <property type="match status" value="4"/>
</dbReference>
<dbReference type="SUPFAM" id="SSF47473">
    <property type="entry name" value="EF-hand"/>
    <property type="match status" value="1"/>
</dbReference>
<dbReference type="PROSITE" id="PS00018">
    <property type="entry name" value="EF_HAND_1"/>
    <property type="match status" value="4"/>
</dbReference>
<dbReference type="PROSITE" id="PS50222">
    <property type="entry name" value="EF_HAND_2"/>
    <property type="match status" value="4"/>
</dbReference>
<comment type="function">
    <text evidence="1">Potential calcium sensor.</text>
</comment>
<comment type="caution">
    <text evidence="4">Although assigned as a calmodulin family member by PubMed:17263873, it only contains EF-hand domains.</text>
</comment>
<gene>
    <name type="primary">CML16</name>
    <name type="ordered locus">Os01g0135700</name>
    <name type="ordered locus">LOC_Os01g04330</name>
    <name type="ORF">OsJ_000267</name>
    <name type="ORF">OSJNBa0083M16.46</name>
</gene>
<keyword id="KW-0106">Calcium</keyword>
<keyword id="KW-0479">Metal-binding</keyword>
<keyword id="KW-1185">Reference proteome</keyword>
<keyword id="KW-0677">Repeat</keyword>
<reference key="1">
    <citation type="journal article" date="2002" name="Nature">
        <title>The genome sequence and structure of rice chromosome 1.</title>
        <authorList>
            <person name="Sasaki T."/>
            <person name="Matsumoto T."/>
            <person name="Yamamoto K."/>
            <person name="Sakata K."/>
            <person name="Baba T."/>
            <person name="Katayose Y."/>
            <person name="Wu J."/>
            <person name="Niimura Y."/>
            <person name="Cheng Z."/>
            <person name="Nagamura Y."/>
            <person name="Antonio B.A."/>
            <person name="Kanamori H."/>
            <person name="Hosokawa S."/>
            <person name="Masukawa M."/>
            <person name="Arikawa K."/>
            <person name="Chiden Y."/>
            <person name="Hayashi M."/>
            <person name="Okamoto M."/>
            <person name="Ando T."/>
            <person name="Aoki H."/>
            <person name="Arita K."/>
            <person name="Hamada M."/>
            <person name="Harada C."/>
            <person name="Hijishita S."/>
            <person name="Honda M."/>
            <person name="Ichikawa Y."/>
            <person name="Idonuma A."/>
            <person name="Iijima M."/>
            <person name="Ikeda M."/>
            <person name="Ikeno M."/>
            <person name="Ito S."/>
            <person name="Ito T."/>
            <person name="Ito Y."/>
            <person name="Ito Y."/>
            <person name="Iwabuchi A."/>
            <person name="Kamiya K."/>
            <person name="Karasawa W."/>
            <person name="Katagiri S."/>
            <person name="Kikuta A."/>
            <person name="Kobayashi N."/>
            <person name="Kono I."/>
            <person name="Machita K."/>
            <person name="Maehara T."/>
            <person name="Mizuno H."/>
            <person name="Mizubayashi T."/>
            <person name="Mukai Y."/>
            <person name="Nagasaki H."/>
            <person name="Nakashima M."/>
            <person name="Nakama Y."/>
            <person name="Nakamichi Y."/>
            <person name="Nakamura M."/>
            <person name="Namiki N."/>
            <person name="Negishi M."/>
            <person name="Ohta I."/>
            <person name="Ono N."/>
            <person name="Saji S."/>
            <person name="Sakai K."/>
            <person name="Shibata M."/>
            <person name="Shimokawa T."/>
            <person name="Shomura A."/>
            <person name="Song J."/>
            <person name="Takazaki Y."/>
            <person name="Terasawa K."/>
            <person name="Tsuji K."/>
            <person name="Waki K."/>
            <person name="Yamagata H."/>
            <person name="Yamane H."/>
            <person name="Yoshiki S."/>
            <person name="Yoshihara R."/>
            <person name="Yukawa K."/>
            <person name="Zhong H."/>
            <person name="Iwama H."/>
            <person name="Endo T."/>
            <person name="Ito H."/>
            <person name="Hahn J.H."/>
            <person name="Kim H.-I."/>
            <person name="Eun M.-Y."/>
            <person name="Yano M."/>
            <person name="Jiang J."/>
            <person name="Gojobori T."/>
        </authorList>
    </citation>
    <scope>NUCLEOTIDE SEQUENCE [LARGE SCALE GENOMIC DNA]</scope>
    <source>
        <strain>cv. Nipponbare</strain>
    </source>
</reference>
<reference key="2">
    <citation type="journal article" date="2005" name="Nature">
        <title>The map-based sequence of the rice genome.</title>
        <authorList>
            <consortium name="International rice genome sequencing project (IRGSP)"/>
        </authorList>
    </citation>
    <scope>NUCLEOTIDE SEQUENCE [LARGE SCALE GENOMIC DNA]</scope>
    <source>
        <strain>cv. Nipponbare</strain>
    </source>
</reference>
<reference key="3">
    <citation type="journal article" date="2008" name="Nucleic Acids Res.">
        <title>The rice annotation project database (RAP-DB): 2008 update.</title>
        <authorList>
            <consortium name="The rice annotation project (RAP)"/>
        </authorList>
    </citation>
    <scope>GENOME REANNOTATION</scope>
    <source>
        <strain>cv. Nipponbare</strain>
    </source>
</reference>
<reference key="4">
    <citation type="journal article" date="2013" name="Rice">
        <title>Improvement of the Oryza sativa Nipponbare reference genome using next generation sequence and optical map data.</title>
        <authorList>
            <person name="Kawahara Y."/>
            <person name="de la Bastide M."/>
            <person name="Hamilton J.P."/>
            <person name="Kanamori H."/>
            <person name="McCombie W.R."/>
            <person name="Ouyang S."/>
            <person name="Schwartz D.C."/>
            <person name="Tanaka T."/>
            <person name="Wu J."/>
            <person name="Zhou S."/>
            <person name="Childs K.L."/>
            <person name="Davidson R.M."/>
            <person name="Lin H."/>
            <person name="Quesada-Ocampo L."/>
            <person name="Vaillancourt B."/>
            <person name="Sakai H."/>
            <person name="Lee S.S."/>
            <person name="Kim J."/>
            <person name="Numa H."/>
            <person name="Itoh T."/>
            <person name="Buell C.R."/>
            <person name="Matsumoto T."/>
        </authorList>
    </citation>
    <scope>GENOME REANNOTATION</scope>
    <source>
        <strain>cv. Nipponbare</strain>
    </source>
</reference>
<reference key="5">
    <citation type="journal article" date="2005" name="PLoS Biol.">
        <title>The genomes of Oryza sativa: a history of duplications.</title>
        <authorList>
            <person name="Yu J."/>
            <person name="Wang J."/>
            <person name="Lin W."/>
            <person name="Li S."/>
            <person name="Li H."/>
            <person name="Zhou J."/>
            <person name="Ni P."/>
            <person name="Dong W."/>
            <person name="Hu S."/>
            <person name="Zeng C."/>
            <person name="Zhang J."/>
            <person name="Zhang Y."/>
            <person name="Li R."/>
            <person name="Xu Z."/>
            <person name="Li S."/>
            <person name="Li X."/>
            <person name="Zheng H."/>
            <person name="Cong L."/>
            <person name="Lin L."/>
            <person name="Yin J."/>
            <person name="Geng J."/>
            <person name="Li G."/>
            <person name="Shi J."/>
            <person name="Liu J."/>
            <person name="Lv H."/>
            <person name="Li J."/>
            <person name="Wang J."/>
            <person name="Deng Y."/>
            <person name="Ran L."/>
            <person name="Shi X."/>
            <person name="Wang X."/>
            <person name="Wu Q."/>
            <person name="Li C."/>
            <person name="Ren X."/>
            <person name="Wang J."/>
            <person name="Wang X."/>
            <person name="Li D."/>
            <person name="Liu D."/>
            <person name="Zhang X."/>
            <person name="Ji Z."/>
            <person name="Zhao W."/>
            <person name="Sun Y."/>
            <person name="Zhang Z."/>
            <person name="Bao J."/>
            <person name="Han Y."/>
            <person name="Dong L."/>
            <person name="Ji J."/>
            <person name="Chen P."/>
            <person name="Wu S."/>
            <person name="Liu J."/>
            <person name="Xiao Y."/>
            <person name="Bu D."/>
            <person name="Tan J."/>
            <person name="Yang L."/>
            <person name="Ye C."/>
            <person name="Zhang J."/>
            <person name="Xu J."/>
            <person name="Zhou Y."/>
            <person name="Yu Y."/>
            <person name="Zhang B."/>
            <person name="Zhuang S."/>
            <person name="Wei H."/>
            <person name="Liu B."/>
            <person name="Lei M."/>
            <person name="Yu H."/>
            <person name="Li Y."/>
            <person name="Xu H."/>
            <person name="Wei S."/>
            <person name="He X."/>
            <person name="Fang L."/>
            <person name="Zhang Z."/>
            <person name="Zhang Y."/>
            <person name="Huang X."/>
            <person name="Su Z."/>
            <person name="Tong W."/>
            <person name="Li J."/>
            <person name="Tong Z."/>
            <person name="Li S."/>
            <person name="Ye J."/>
            <person name="Wang L."/>
            <person name="Fang L."/>
            <person name="Lei T."/>
            <person name="Chen C.-S."/>
            <person name="Chen H.-C."/>
            <person name="Xu Z."/>
            <person name="Li H."/>
            <person name="Huang H."/>
            <person name="Zhang F."/>
            <person name="Xu H."/>
            <person name="Li N."/>
            <person name="Zhao C."/>
            <person name="Li S."/>
            <person name="Dong L."/>
            <person name="Huang Y."/>
            <person name="Li L."/>
            <person name="Xi Y."/>
            <person name="Qi Q."/>
            <person name="Li W."/>
            <person name="Zhang B."/>
            <person name="Hu W."/>
            <person name="Zhang Y."/>
            <person name="Tian X."/>
            <person name="Jiao Y."/>
            <person name="Liang X."/>
            <person name="Jin J."/>
            <person name="Gao L."/>
            <person name="Zheng W."/>
            <person name="Hao B."/>
            <person name="Liu S.-M."/>
            <person name="Wang W."/>
            <person name="Yuan L."/>
            <person name="Cao M."/>
            <person name="McDermott J."/>
            <person name="Samudrala R."/>
            <person name="Wang J."/>
            <person name="Wong G.K.-S."/>
            <person name="Yang H."/>
        </authorList>
    </citation>
    <scope>NUCLEOTIDE SEQUENCE [LARGE SCALE GENOMIC DNA]</scope>
    <source>
        <strain>cv. Nipponbare</strain>
    </source>
</reference>
<reference key="6">
    <citation type="journal article" date="2003" name="Science">
        <title>Collection, mapping, and annotation of over 28,000 cDNA clones from japonica rice.</title>
        <authorList>
            <consortium name="The rice full-length cDNA consortium"/>
        </authorList>
    </citation>
    <scope>NUCLEOTIDE SEQUENCE [LARGE SCALE MRNA]</scope>
    <source>
        <strain>cv. Nipponbare</strain>
    </source>
</reference>
<reference key="7">
    <citation type="journal article" date="2007" name="BMC Plant Biol.">
        <title>Genome-wide identification and analyses of the rice calmodulin and related potential calcium sensor proteins.</title>
        <authorList>
            <person name="Boonburapong B."/>
            <person name="Buaboocha T."/>
        </authorList>
    </citation>
    <scope>GENE FAMILY</scope>
    <scope>NOMENCLATURE</scope>
</reference>
<feature type="chain" id="PRO_0000338431" description="Probable calcium-binding protein CML16">
    <location>
        <begin position="1"/>
        <end position="181"/>
    </location>
</feature>
<feature type="domain" description="EF-hand 1" evidence="2">
    <location>
        <begin position="23"/>
        <end position="58"/>
    </location>
</feature>
<feature type="domain" description="EF-hand 2" evidence="2">
    <location>
        <begin position="63"/>
        <end position="98"/>
    </location>
</feature>
<feature type="domain" description="EF-hand 3" evidence="2">
    <location>
        <begin position="100"/>
        <end position="135"/>
    </location>
</feature>
<feature type="domain" description="EF-hand 4" evidence="2">
    <location>
        <begin position="136"/>
        <end position="171"/>
    </location>
</feature>
<feature type="region of interest" description="Disordered" evidence="3">
    <location>
        <begin position="1"/>
        <end position="24"/>
    </location>
</feature>
<feature type="binding site" evidence="2">
    <location>
        <position position="36"/>
    </location>
    <ligand>
        <name>Ca(2+)</name>
        <dbReference type="ChEBI" id="CHEBI:29108"/>
        <label>1</label>
    </ligand>
</feature>
<feature type="binding site" evidence="2">
    <location>
        <position position="38"/>
    </location>
    <ligand>
        <name>Ca(2+)</name>
        <dbReference type="ChEBI" id="CHEBI:29108"/>
        <label>1</label>
    </ligand>
</feature>
<feature type="binding site" evidence="2">
    <location>
        <position position="40"/>
    </location>
    <ligand>
        <name>Ca(2+)</name>
        <dbReference type="ChEBI" id="CHEBI:29108"/>
        <label>1</label>
    </ligand>
</feature>
<feature type="binding site" evidence="2">
    <location>
        <position position="42"/>
    </location>
    <ligand>
        <name>Ca(2+)</name>
        <dbReference type="ChEBI" id="CHEBI:29108"/>
        <label>1</label>
    </ligand>
</feature>
<feature type="binding site" evidence="2">
    <location>
        <position position="47"/>
    </location>
    <ligand>
        <name>Ca(2+)</name>
        <dbReference type="ChEBI" id="CHEBI:29108"/>
        <label>1</label>
    </ligand>
</feature>
<feature type="binding site" evidence="2">
    <location>
        <position position="76"/>
    </location>
    <ligand>
        <name>Ca(2+)</name>
        <dbReference type="ChEBI" id="CHEBI:29108"/>
        <label>2</label>
    </ligand>
</feature>
<feature type="binding site" evidence="2">
    <location>
        <position position="78"/>
    </location>
    <ligand>
        <name>Ca(2+)</name>
        <dbReference type="ChEBI" id="CHEBI:29108"/>
        <label>2</label>
    </ligand>
</feature>
<feature type="binding site" evidence="2">
    <location>
        <position position="80"/>
    </location>
    <ligand>
        <name>Ca(2+)</name>
        <dbReference type="ChEBI" id="CHEBI:29108"/>
        <label>2</label>
    </ligand>
</feature>
<feature type="binding site" evidence="2">
    <location>
        <position position="87"/>
    </location>
    <ligand>
        <name>Ca(2+)</name>
        <dbReference type="ChEBI" id="CHEBI:29108"/>
        <label>2</label>
    </ligand>
</feature>
<feature type="binding site" evidence="2">
    <location>
        <position position="113"/>
    </location>
    <ligand>
        <name>Ca(2+)</name>
        <dbReference type="ChEBI" id="CHEBI:29108"/>
        <label>3</label>
    </ligand>
</feature>
<feature type="binding site" evidence="2">
    <location>
        <position position="115"/>
    </location>
    <ligand>
        <name>Ca(2+)</name>
        <dbReference type="ChEBI" id="CHEBI:29108"/>
        <label>3</label>
    </ligand>
</feature>
<feature type="binding site" evidence="2">
    <location>
        <position position="117"/>
    </location>
    <ligand>
        <name>Ca(2+)</name>
        <dbReference type="ChEBI" id="CHEBI:29108"/>
        <label>3</label>
    </ligand>
</feature>
<feature type="binding site" evidence="2">
    <location>
        <position position="119"/>
    </location>
    <ligand>
        <name>Ca(2+)</name>
        <dbReference type="ChEBI" id="CHEBI:29108"/>
        <label>3</label>
    </ligand>
</feature>
<feature type="binding site" evidence="2">
    <location>
        <position position="124"/>
    </location>
    <ligand>
        <name>Ca(2+)</name>
        <dbReference type="ChEBI" id="CHEBI:29108"/>
        <label>3</label>
    </ligand>
</feature>
<feature type="binding site" evidence="2">
    <location>
        <position position="149"/>
    </location>
    <ligand>
        <name>Ca(2+)</name>
        <dbReference type="ChEBI" id="CHEBI:29108"/>
        <label>4</label>
    </ligand>
</feature>
<feature type="binding site" evidence="2">
    <location>
        <position position="151"/>
    </location>
    <ligand>
        <name>Ca(2+)</name>
        <dbReference type="ChEBI" id="CHEBI:29108"/>
        <label>4</label>
    </ligand>
</feature>
<feature type="binding site" evidence="2">
    <location>
        <position position="153"/>
    </location>
    <ligand>
        <name>Ca(2+)</name>
        <dbReference type="ChEBI" id="CHEBI:29108"/>
        <label>4</label>
    </ligand>
</feature>
<feature type="binding site" evidence="2">
    <location>
        <position position="155"/>
    </location>
    <ligand>
        <name>Ca(2+)</name>
        <dbReference type="ChEBI" id="CHEBI:29108"/>
        <label>4</label>
    </ligand>
</feature>
<feature type="binding site" evidence="2">
    <location>
        <position position="160"/>
    </location>
    <ligand>
        <name>Ca(2+)</name>
        <dbReference type="ChEBI" id="CHEBI:29108"/>
        <label>4</label>
    </ligand>
</feature>
<name>CML16_ORYSJ</name>
<organism>
    <name type="scientific">Oryza sativa subsp. japonica</name>
    <name type="common">Rice</name>
    <dbReference type="NCBI Taxonomy" id="39947"/>
    <lineage>
        <taxon>Eukaryota</taxon>
        <taxon>Viridiplantae</taxon>
        <taxon>Streptophyta</taxon>
        <taxon>Embryophyta</taxon>
        <taxon>Tracheophyta</taxon>
        <taxon>Spermatophyta</taxon>
        <taxon>Magnoliopsida</taxon>
        <taxon>Liliopsida</taxon>
        <taxon>Poales</taxon>
        <taxon>Poaceae</taxon>
        <taxon>BOP clade</taxon>
        <taxon>Oryzoideae</taxon>
        <taxon>Oryzeae</taxon>
        <taxon>Oryzinae</taxon>
        <taxon>Oryza</taxon>
        <taxon>Oryza sativa</taxon>
    </lineage>
</organism>
<sequence>MSNTTEKKMPQQQQVERPTALAPADAEIERVFTRFDADGDGRISPSELAAVTRAIAPPPSESAGGREVAAMMNELDTDRDGFVDLGEFAAFHGRGRGDAEHEAELRAAFDVYDVDGDGRITAAELGKVLGRIGEGCSAEECERMIASVDVDGDGCVGFEEFKKMMCRDAAATGGADKAKTE</sequence>
<evidence type="ECO:0000250" key="1"/>
<evidence type="ECO:0000255" key="2">
    <source>
        <dbReference type="PROSITE-ProRule" id="PRU00448"/>
    </source>
</evidence>
<evidence type="ECO:0000256" key="3">
    <source>
        <dbReference type="SAM" id="MobiDB-lite"/>
    </source>
</evidence>
<evidence type="ECO:0000305" key="4"/>
<protein>
    <recommendedName>
        <fullName>Probable calcium-binding protein CML16</fullName>
    </recommendedName>
    <alternativeName>
        <fullName>Calmodulin-like protein 16</fullName>
    </alternativeName>
</protein>
<proteinExistence type="evidence at transcript level"/>
<accession>Q5ZCK5</accession>
<accession>A0A0N7KCA3</accession>
<accession>B7E7S4</accession>
<accession>Q0JQW4</accession>